<feature type="chain" id="PRO_0000343008" description="Golgi apparatus membrane protein TVP18">
    <location>
        <begin position="1"/>
        <end position="146"/>
    </location>
</feature>
<feature type="transmembrane region" description="Helical" evidence="2">
    <location>
        <begin position="13"/>
        <end position="35"/>
    </location>
</feature>
<feature type="transmembrane region" description="Helical" evidence="2">
    <location>
        <begin position="39"/>
        <end position="61"/>
    </location>
</feature>
<feature type="transmembrane region" description="Helical" evidence="2">
    <location>
        <begin position="82"/>
        <end position="101"/>
    </location>
</feature>
<feature type="transmembrane region" description="Helical" evidence="2">
    <location>
        <begin position="106"/>
        <end position="125"/>
    </location>
</feature>
<feature type="glycosylation site" description="N-linked (GlcNAc...) asparagine" evidence="2">
    <location>
        <position position="11"/>
    </location>
</feature>
<accession>A6QRX6</accession>
<dbReference type="EMBL" id="CH476655">
    <property type="protein sequence ID" value="EDN02268.1"/>
    <property type="molecule type" value="Genomic_DNA"/>
</dbReference>
<dbReference type="STRING" id="339724.A6QRX6"/>
<dbReference type="GlyCosmos" id="A6QRX6">
    <property type="glycosylation" value="1 site, No reported glycans"/>
</dbReference>
<dbReference type="KEGG" id="aje:HCAG_00132"/>
<dbReference type="VEuPathDB" id="FungiDB:HCAG_00132"/>
<dbReference type="HOGENOM" id="CLU_118698_0_0_1"/>
<dbReference type="OMA" id="IYAQWLG"/>
<dbReference type="OrthoDB" id="7368at299071"/>
<dbReference type="Proteomes" id="UP000009297">
    <property type="component" value="Unassembled WGS sequence"/>
</dbReference>
<dbReference type="GO" id="GO:0000139">
    <property type="term" value="C:Golgi membrane"/>
    <property type="evidence" value="ECO:0007669"/>
    <property type="project" value="UniProtKB-SubCell"/>
</dbReference>
<dbReference type="GO" id="GO:0016192">
    <property type="term" value="P:vesicle-mediated transport"/>
    <property type="evidence" value="ECO:0007669"/>
    <property type="project" value="TreeGrafter"/>
</dbReference>
<dbReference type="InterPro" id="IPR019365">
    <property type="entry name" value="TVP18/Ca-channel_flower"/>
</dbReference>
<dbReference type="PANTHER" id="PTHR13314">
    <property type="entry name" value="CALCIUM CHANNEL FLOWER HOMOLOG"/>
    <property type="match status" value="1"/>
</dbReference>
<dbReference type="PANTHER" id="PTHR13314:SF2">
    <property type="entry name" value="CALCIUM CHANNEL FLOWER HOMOLOG"/>
    <property type="match status" value="1"/>
</dbReference>
<dbReference type="Pfam" id="PF10233">
    <property type="entry name" value="Cg6151-P"/>
    <property type="match status" value="1"/>
</dbReference>
<dbReference type="SMART" id="SM01077">
    <property type="entry name" value="Cg6151-P"/>
    <property type="match status" value="1"/>
</dbReference>
<name>TVP18_AJECN</name>
<proteinExistence type="inferred from homology"/>
<evidence type="ECO:0000250" key="1"/>
<evidence type="ECO:0000255" key="2"/>
<evidence type="ECO:0000305" key="3"/>
<gene>
    <name type="primary">TVP18</name>
    <name type="ORF">HCAG_00132</name>
</gene>
<organism>
    <name type="scientific">Ajellomyces capsulatus (strain NAm1 / WU24)</name>
    <name type="common">Darling's disease fungus</name>
    <name type="synonym">Histoplasma capsulatum</name>
    <dbReference type="NCBI Taxonomy" id="2059318"/>
    <lineage>
        <taxon>Eukaryota</taxon>
        <taxon>Fungi</taxon>
        <taxon>Dikarya</taxon>
        <taxon>Ascomycota</taxon>
        <taxon>Pezizomycotina</taxon>
        <taxon>Eurotiomycetes</taxon>
        <taxon>Eurotiomycetidae</taxon>
        <taxon>Onygenales</taxon>
        <taxon>Ajellomycetaceae</taxon>
        <taxon>Histoplasma</taxon>
    </lineage>
</organism>
<protein>
    <recommendedName>
        <fullName>Golgi apparatus membrane protein TVP18</fullName>
    </recommendedName>
</protein>
<keyword id="KW-0325">Glycoprotein</keyword>
<keyword id="KW-0333">Golgi apparatus</keyword>
<keyword id="KW-0472">Membrane</keyword>
<keyword id="KW-1185">Reference proteome</keyword>
<keyword id="KW-0812">Transmembrane</keyword>
<keyword id="KW-1133">Transmembrane helix</keyword>
<comment type="function">
    <text evidence="1">Golgi membrane protein involved in vesicular trafficking.</text>
</comment>
<comment type="subcellular location">
    <subcellularLocation>
        <location evidence="1">Golgi apparatus membrane</location>
        <topology evidence="1">Multi-pass membrane protein</topology>
    </subcellularLocation>
</comment>
<comment type="similarity">
    <text evidence="3">Belongs to the TVP18 family.</text>
</comment>
<reference key="1">
    <citation type="journal article" date="2009" name="Genome Res.">
        <title>Comparative genomic analyses of the human fungal pathogens Coccidioides and their relatives.</title>
        <authorList>
            <person name="Sharpton T.J."/>
            <person name="Stajich J.E."/>
            <person name="Rounsley S.D."/>
            <person name="Gardner M.J."/>
            <person name="Wortman J.R."/>
            <person name="Jordar V.S."/>
            <person name="Maiti R."/>
            <person name="Kodira C.D."/>
            <person name="Neafsey D.E."/>
            <person name="Zeng Q."/>
            <person name="Hung C.-Y."/>
            <person name="McMahan C."/>
            <person name="Muszewska A."/>
            <person name="Grynberg M."/>
            <person name="Mandel M.A."/>
            <person name="Kellner E.M."/>
            <person name="Barker B.M."/>
            <person name="Galgiani J.N."/>
            <person name="Orbach M.J."/>
            <person name="Kirkland T.N."/>
            <person name="Cole G.T."/>
            <person name="Henn M.R."/>
            <person name="Birren B.W."/>
            <person name="Taylor J.W."/>
        </authorList>
    </citation>
    <scope>NUCLEOTIDE SEQUENCE [LARGE SCALE GENOMIC DNA]</scope>
    <source>
        <strain>NAm1 / WU24</strain>
    </source>
</reference>
<sequence>MTIAEEFKSRNFSIYGQWTGVLCILLCFALGIANIFSKVIAFSIVCLASSFVIIFVEVPLLLRICPTSSTFDSFIRRFTTNYMRALMYVILSVVQWLSLIVGPSSLLAAAVVLSVSAIFYALAGITKQEFMGSKTLGGQGVAQMIV</sequence>